<comment type="function">
    <text evidence="1">NDH-1 shuttles electrons from NADH, via FMN and iron-sulfur (Fe-S) centers, to quinones in the respiratory chain. The immediate electron acceptor for the enzyme in this species is believed to be ubiquinone. Couples the redox reaction to proton translocation (for every two electrons transferred, four hydrogen ions are translocated across the cytoplasmic membrane), and thus conserves the redox energy in a proton gradient.</text>
</comment>
<comment type="catalytic activity">
    <reaction evidence="1">
        <text>a quinone + NADH + 5 H(+)(in) = a quinol + NAD(+) + 4 H(+)(out)</text>
        <dbReference type="Rhea" id="RHEA:57888"/>
        <dbReference type="ChEBI" id="CHEBI:15378"/>
        <dbReference type="ChEBI" id="CHEBI:24646"/>
        <dbReference type="ChEBI" id="CHEBI:57540"/>
        <dbReference type="ChEBI" id="CHEBI:57945"/>
        <dbReference type="ChEBI" id="CHEBI:132124"/>
    </reaction>
</comment>
<comment type="subunit">
    <text evidence="1">NDH-1 is composed of 13 different subunits. Subunits NuoA, H, J, K, L, M, N constitute the membrane sector of the complex.</text>
</comment>
<comment type="subcellular location">
    <subcellularLocation>
        <location evidence="1">Cell inner membrane</location>
        <topology evidence="1">Multi-pass membrane protein</topology>
    </subcellularLocation>
</comment>
<comment type="similarity">
    <text evidence="1">Belongs to the complex I subunit 4L family.</text>
</comment>
<evidence type="ECO:0000255" key="1">
    <source>
        <dbReference type="HAMAP-Rule" id="MF_01456"/>
    </source>
</evidence>
<feature type="chain" id="PRO_0000390051" description="NADH-quinone oxidoreductase subunit K">
    <location>
        <begin position="1"/>
        <end position="100"/>
    </location>
</feature>
<feature type="transmembrane region" description="Helical" evidence="1">
    <location>
        <begin position="4"/>
        <end position="24"/>
    </location>
</feature>
<feature type="transmembrane region" description="Helical" evidence="1">
    <location>
        <begin position="28"/>
        <end position="48"/>
    </location>
</feature>
<feature type="transmembrane region" description="Helical" evidence="1">
    <location>
        <begin position="60"/>
        <end position="80"/>
    </location>
</feature>
<proteinExistence type="inferred from homology"/>
<protein>
    <recommendedName>
        <fullName evidence="1">NADH-quinone oxidoreductase subunit K</fullName>
        <ecNumber evidence="1">7.1.1.-</ecNumber>
    </recommendedName>
    <alternativeName>
        <fullName evidence="1">NADH dehydrogenase I subunit K</fullName>
    </alternativeName>
    <alternativeName>
        <fullName evidence="1">NDH-1 subunit K</fullName>
    </alternativeName>
</protein>
<accession>B5YXR9</accession>
<name>NUOK_ECO5E</name>
<gene>
    <name evidence="1" type="primary">nuoK</name>
    <name type="ordered locus">ECH74115_3418</name>
</gene>
<organism>
    <name type="scientific">Escherichia coli O157:H7 (strain EC4115 / EHEC)</name>
    <dbReference type="NCBI Taxonomy" id="444450"/>
    <lineage>
        <taxon>Bacteria</taxon>
        <taxon>Pseudomonadati</taxon>
        <taxon>Pseudomonadota</taxon>
        <taxon>Gammaproteobacteria</taxon>
        <taxon>Enterobacterales</taxon>
        <taxon>Enterobacteriaceae</taxon>
        <taxon>Escherichia</taxon>
    </lineage>
</organism>
<reference key="1">
    <citation type="journal article" date="2011" name="Proc. Natl. Acad. Sci. U.S.A.">
        <title>Genomic anatomy of Escherichia coli O157:H7 outbreaks.</title>
        <authorList>
            <person name="Eppinger M."/>
            <person name="Mammel M.K."/>
            <person name="Leclerc J.E."/>
            <person name="Ravel J."/>
            <person name="Cebula T.A."/>
        </authorList>
    </citation>
    <scope>NUCLEOTIDE SEQUENCE [LARGE SCALE GENOMIC DNA]</scope>
    <source>
        <strain>EC4115 / EHEC</strain>
    </source>
</reference>
<keyword id="KW-0997">Cell inner membrane</keyword>
<keyword id="KW-1003">Cell membrane</keyword>
<keyword id="KW-0472">Membrane</keyword>
<keyword id="KW-0520">NAD</keyword>
<keyword id="KW-0874">Quinone</keyword>
<keyword id="KW-1278">Translocase</keyword>
<keyword id="KW-0812">Transmembrane</keyword>
<keyword id="KW-1133">Transmembrane helix</keyword>
<keyword id="KW-0813">Transport</keyword>
<keyword id="KW-0830">Ubiquinone</keyword>
<dbReference type="EC" id="7.1.1.-" evidence="1"/>
<dbReference type="EMBL" id="CP001164">
    <property type="protein sequence ID" value="ACI36546.1"/>
    <property type="molecule type" value="Genomic_DNA"/>
</dbReference>
<dbReference type="RefSeq" id="WP_000612644.1">
    <property type="nucleotide sequence ID" value="NC_011353.1"/>
</dbReference>
<dbReference type="SMR" id="B5YXR9"/>
<dbReference type="GeneID" id="93033872"/>
<dbReference type="KEGG" id="ecf:ECH74115_3418"/>
<dbReference type="HOGENOM" id="CLU_144724_0_1_6"/>
<dbReference type="GO" id="GO:0030964">
    <property type="term" value="C:NADH dehydrogenase complex"/>
    <property type="evidence" value="ECO:0007669"/>
    <property type="project" value="TreeGrafter"/>
</dbReference>
<dbReference type="GO" id="GO:0005886">
    <property type="term" value="C:plasma membrane"/>
    <property type="evidence" value="ECO:0007669"/>
    <property type="project" value="UniProtKB-SubCell"/>
</dbReference>
<dbReference type="GO" id="GO:0050136">
    <property type="term" value="F:NADH:ubiquinone reductase (non-electrogenic) activity"/>
    <property type="evidence" value="ECO:0007669"/>
    <property type="project" value="UniProtKB-UniRule"/>
</dbReference>
<dbReference type="GO" id="GO:0048038">
    <property type="term" value="F:quinone binding"/>
    <property type="evidence" value="ECO:0007669"/>
    <property type="project" value="UniProtKB-KW"/>
</dbReference>
<dbReference type="GO" id="GO:0042773">
    <property type="term" value="P:ATP synthesis coupled electron transport"/>
    <property type="evidence" value="ECO:0007669"/>
    <property type="project" value="InterPro"/>
</dbReference>
<dbReference type="FunFam" id="1.10.287.3510:FF:000001">
    <property type="entry name" value="NADH-quinone oxidoreductase subunit K"/>
    <property type="match status" value="1"/>
</dbReference>
<dbReference type="Gene3D" id="1.10.287.3510">
    <property type="match status" value="1"/>
</dbReference>
<dbReference type="HAMAP" id="MF_01456">
    <property type="entry name" value="NDH1_NuoK"/>
    <property type="match status" value="1"/>
</dbReference>
<dbReference type="InterPro" id="IPR001133">
    <property type="entry name" value="NADH_UbQ_OxRdtase_chain4L/K"/>
</dbReference>
<dbReference type="InterPro" id="IPR039428">
    <property type="entry name" value="NUOK/Mnh_C1-like"/>
</dbReference>
<dbReference type="NCBIfam" id="NF004319">
    <property type="entry name" value="PRK05715.1-1"/>
    <property type="match status" value="1"/>
</dbReference>
<dbReference type="NCBIfam" id="NF004320">
    <property type="entry name" value="PRK05715.1-2"/>
    <property type="match status" value="1"/>
</dbReference>
<dbReference type="PANTHER" id="PTHR11434:SF16">
    <property type="entry name" value="NADH-UBIQUINONE OXIDOREDUCTASE CHAIN 4L"/>
    <property type="match status" value="1"/>
</dbReference>
<dbReference type="PANTHER" id="PTHR11434">
    <property type="entry name" value="NADH-UBIQUINONE OXIDOREDUCTASE SUBUNIT ND4L"/>
    <property type="match status" value="1"/>
</dbReference>
<dbReference type="Pfam" id="PF00420">
    <property type="entry name" value="Oxidored_q2"/>
    <property type="match status" value="1"/>
</dbReference>
<sequence length="100" mass="10845">MIPLQHGLILAAILFVLGLTGLVIRRNLLFMLIGLEIMINASALAFVVAGSYWGQTDGQVMYILAISLAAAEASIGLALLLQLHRRRQNLNIDSVSEMRG</sequence>